<dbReference type="EC" id="5.4.2.10" evidence="1"/>
<dbReference type="EMBL" id="CP000248">
    <property type="protein sequence ID" value="ABD24929.1"/>
    <property type="molecule type" value="Genomic_DNA"/>
</dbReference>
<dbReference type="RefSeq" id="WP_011444143.1">
    <property type="nucleotide sequence ID" value="NC_007794.1"/>
</dbReference>
<dbReference type="SMR" id="Q2GB44"/>
<dbReference type="STRING" id="279238.Saro_0481"/>
<dbReference type="KEGG" id="nar:Saro_0481"/>
<dbReference type="eggNOG" id="COG1109">
    <property type="taxonomic scope" value="Bacteria"/>
</dbReference>
<dbReference type="HOGENOM" id="CLU_016950_7_0_5"/>
<dbReference type="Proteomes" id="UP000009134">
    <property type="component" value="Chromosome"/>
</dbReference>
<dbReference type="GO" id="GO:0005829">
    <property type="term" value="C:cytosol"/>
    <property type="evidence" value="ECO:0007669"/>
    <property type="project" value="TreeGrafter"/>
</dbReference>
<dbReference type="GO" id="GO:0000287">
    <property type="term" value="F:magnesium ion binding"/>
    <property type="evidence" value="ECO:0007669"/>
    <property type="project" value="UniProtKB-UniRule"/>
</dbReference>
<dbReference type="GO" id="GO:0008966">
    <property type="term" value="F:phosphoglucosamine mutase activity"/>
    <property type="evidence" value="ECO:0007669"/>
    <property type="project" value="UniProtKB-UniRule"/>
</dbReference>
<dbReference type="GO" id="GO:0004615">
    <property type="term" value="F:phosphomannomutase activity"/>
    <property type="evidence" value="ECO:0007669"/>
    <property type="project" value="TreeGrafter"/>
</dbReference>
<dbReference type="GO" id="GO:0005975">
    <property type="term" value="P:carbohydrate metabolic process"/>
    <property type="evidence" value="ECO:0007669"/>
    <property type="project" value="InterPro"/>
</dbReference>
<dbReference type="GO" id="GO:0009252">
    <property type="term" value="P:peptidoglycan biosynthetic process"/>
    <property type="evidence" value="ECO:0007669"/>
    <property type="project" value="TreeGrafter"/>
</dbReference>
<dbReference type="GO" id="GO:0006048">
    <property type="term" value="P:UDP-N-acetylglucosamine biosynthetic process"/>
    <property type="evidence" value="ECO:0007669"/>
    <property type="project" value="TreeGrafter"/>
</dbReference>
<dbReference type="CDD" id="cd05802">
    <property type="entry name" value="GlmM"/>
    <property type="match status" value="1"/>
</dbReference>
<dbReference type="FunFam" id="3.30.310.50:FF:000001">
    <property type="entry name" value="Phosphoglucosamine mutase"/>
    <property type="match status" value="1"/>
</dbReference>
<dbReference type="FunFam" id="3.40.120.10:FF:000001">
    <property type="entry name" value="Phosphoglucosamine mutase"/>
    <property type="match status" value="1"/>
</dbReference>
<dbReference type="FunFam" id="3.40.120.10:FF:000002">
    <property type="entry name" value="Phosphoglucosamine mutase"/>
    <property type="match status" value="1"/>
</dbReference>
<dbReference type="Gene3D" id="3.40.120.10">
    <property type="entry name" value="Alpha-D-Glucose-1,6-Bisphosphate, subunit A, domain 3"/>
    <property type="match status" value="3"/>
</dbReference>
<dbReference type="Gene3D" id="3.30.310.50">
    <property type="entry name" value="Alpha-D-phosphohexomutase, C-terminal domain"/>
    <property type="match status" value="1"/>
</dbReference>
<dbReference type="HAMAP" id="MF_01554_B">
    <property type="entry name" value="GlmM_B"/>
    <property type="match status" value="1"/>
</dbReference>
<dbReference type="InterPro" id="IPR005844">
    <property type="entry name" value="A-D-PHexomutase_a/b/a-I"/>
</dbReference>
<dbReference type="InterPro" id="IPR016055">
    <property type="entry name" value="A-D-PHexomutase_a/b/a-I/II/III"/>
</dbReference>
<dbReference type="InterPro" id="IPR005845">
    <property type="entry name" value="A-D-PHexomutase_a/b/a-II"/>
</dbReference>
<dbReference type="InterPro" id="IPR005846">
    <property type="entry name" value="A-D-PHexomutase_a/b/a-III"/>
</dbReference>
<dbReference type="InterPro" id="IPR005843">
    <property type="entry name" value="A-D-PHexomutase_C"/>
</dbReference>
<dbReference type="InterPro" id="IPR036900">
    <property type="entry name" value="A-D-PHexomutase_C_sf"/>
</dbReference>
<dbReference type="InterPro" id="IPR016066">
    <property type="entry name" value="A-D-PHexomutase_CS"/>
</dbReference>
<dbReference type="InterPro" id="IPR005841">
    <property type="entry name" value="Alpha-D-phosphohexomutase_SF"/>
</dbReference>
<dbReference type="InterPro" id="IPR006352">
    <property type="entry name" value="GlmM_bact"/>
</dbReference>
<dbReference type="InterPro" id="IPR050060">
    <property type="entry name" value="Phosphoglucosamine_mutase"/>
</dbReference>
<dbReference type="NCBIfam" id="TIGR01455">
    <property type="entry name" value="glmM"/>
    <property type="match status" value="1"/>
</dbReference>
<dbReference type="NCBIfam" id="NF008139">
    <property type="entry name" value="PRK10887.1"/>
    <property type="match status" value="1"/>
</dbReference>
<dbReference type="PANTHER" id="PTHR42946:SF1">
    <property type="entry name" value="PHOSPHOGLUCOMUTASE (ALPHA-D-GLUCOSE-1,6-BISPHOSPHATE-DEPENDENT)"/>
    <property type="match status" value="1"/>
</dbReference>
<dbReference type="PANTHER" id="PTHR42946">
    <property type="entry name" value="PHOSPHOHEXOSE MUTASE"/>
    <property type="match status" value="1"/>
</dbReference>
<dbReference type="Pfam" id="PF02878">
    <property type="entry name" value="PGM_PMM_I"/>
    <property type="match status" value="1"/>
</dbReference>
<dbReference type="Pfam" id="PF02879">
    <property type="entry name" value="PGM_PMM_II"/>
    <property type="match status" value="1"/>
</dbReference>
<dbReference type="Pfam" id="PF02880">
    <property type="entry name" value="PGM_PMM_III"/>
    <property type="match status" value="1"/>
</dbReference>
<dbReference type="Pfam" id="PF00408">
    <property type="entry name" value="PGM_PMM_IV"/>
    <property type="match status" value="1"/>
</dbReference>
<dbReference type="PRINTS" id="PR00509">
    <property type="entry name" value="PGMPMM"/>
</dbReference>
<dbReference type="SUPFAM" id="SSF55957">
    <property type="entry name" value="Phosphoglucomutase, C-terminal domain"/>
    <property type="match status" value="1"/>
</dbReference>
<dbReference type="SUPFAM" id="SSF53738">
    <property type="entry name" value="Phosphoglucomutase, first 3 domains"/>
    <property type="match status" value="3"/>
</dbReference>
<dbReference type="PROSITE" id="PS00710">
    <property type="entry name" value="PGM_PMM"/>
    <property type="match status" value="1"/>
</dbReference>
<evidence type="ECO:0000255" key="1">
    <source>
        <dbReference type="HAMAP-Rule" id="MF_01554"/>
    </source>
</evidence>
<name>GLMM_NOVAD</name>
<protein>
    <recommendedName>
        <fullName evidence="1">Phosphoglucosamine mutase</fullName>
        <ecNumber evidence="1">5.4.2.10</ecNumber>
    </recommendedName>
</protein>
<accession>Q2GB44</accession>
<sequence>MARKFFGTDGIRGRTNSGVMTAEIAMKVGQAAGTYFQRGTHRHRVVIGKDTRLSGYMMESAMTAGFTSVGMDVVLLGPMPTPAVAMLTRSMRADLGVMISASHNPFEDNGIKLFGPDGYKLSDEAELTIESMLLQELPLADAAQVGRARRIEDARGRYIHAVKASLPDNVRLDGLRIVVDCANGAAYHVTPSALWELGAEVIAIGVEPNGKNINAGVGSTHLDAIKAKVRETRADIGIALDGDADRLIVVDEKCQTVDGDQIMALIGTQLAARGELRGGGVVATVMSNLGLERHLNAHGLTLERTAVGDRYVLERMRSGGFNVGGEQSGHMILTDHATTGDGTVAALQVLAALVSSGKPASELLHLFDPVPQLLKNVRFTGGKPLEAKSVKEAIAEAEARLAGKGRLVIRPSGTEPLIRVMAEGDDADEVEAVVDQICDAVRKAA</sequence>
<feature type="chain" id="PRO_0000301351" description="Phosphoglucosamine mutase">
    <location>
        <begin position="1"/>
        <end position="445"/>
    </location>
</feature>
<feature type="active site" description="Phosphoserine intermediate" evidence="1">
    <location>
        <position position="102"/>
    </location>
</feature>
<feature type="binding site" description="via phosphate group" evidence="1">
    <location>
        <position position="102"/>
    </location>
    <ligand>
        <name>Mg(2+)</name>
        <dbReference type="ChEBI" id="CHEBI:18420"/>
    </ligand>
</feature>
<feature type="binding site" evidence="1">
    <location>
        <position position="241"/>
    </location>
    <ligand>
        <name>Mg(2+)</name>
        <dbReference type="ChEBI" id="CHEBI:18420"/>
    </ligand>
</feature>
<feature type="binding site" evidence="1">
    <location>
        <position position="243"/>
    </location>
    <ligand>
        <name>Mg(2+)</name>
        <dbReference type="ChEBI" id="CHEBI:18420"/>
    </ligand>
</feature>
<feature type="binding site" evidence="1">
    <location>
        <position position="245"/>
    </location>
    <ligand>
        <name>Mg(2+)</name>
        <dbReference type="ChEBI" id="CHEBI:18420"/>
    </ligand>
</feature>
<feature type="modified residue" description="Phosphoserine" evidence="1">
    <location>
        <position position="102"/>
    </location>
</feature>
<gene>
    <name evidence="1" type="primary">glmM</name>
    <name type="ordered locus">Saro_0481</name>
</gene>
<organism>
    <name type="scientific">Novosphingobium aromaticivorans (strain ATCC 700278 / DSM 12444 / CCUG 56034 / CIP 105152 / NBRC 16084 / F199)</name>
    <dbReference type="NCBI Taxonomy" id="279238"/>
    <lineage>
        <taxon>Bacteria</taxon>
        <taxon>Pseudomonadati</taxon>
        <taxon>Pseudomonadota</taxon>
        <taxon>Alphaproteobacteria</taxon>
        <taxon>Sphingomonadales</taxon>
        <taxon>Sphingomonadaceae</taxon>
        <taxon>Novosphingobium</taxon>
    </lineage>
</organism>
<reference key="1">
    <citation type="submission" date="2006-01" db="EMBL/GenBank/DDBJ databases">
        <title>Complete sequence of Novosphingobium aromaticivorans DSM 12444.</title>
        <authorList>
            <consortium name="US DOE Joint Genome Institute"/>
            <person name="Copeland A."/>
            <person name="Lucas S."/>
            <person name="Lapidus A."/>
            <person name="Barry K."/>
            <person name="Detter J.C."/>
            <person name="Glavina T."/>
            <person name="Hammon N."/>
            <person name="Israni S."/>
            <person name="Pitluck S."/>
            <person name="Chain P."/>
            <person name="Malfatti S."/>
            <person name="Shin M."/>
            <person name="Vergez L."/>
            <person name="Schmutz J."/>
            <person name="Larimer F."/>
            <person name="Land M."/>
            <person name="Kyrpides N."/>
            <person name="Ivanova N."/>
            <person name="Fredrickson J."/>
            <person name="Balkwill D."/>
            <person name="Romine M.F."/>
            <person name="Richardson P."/>
        </authorList>
    </citation>
    <scope>NUCLEOTIDE SEQUENCE [LARGE SCALE GENOMIC DNA]</scope>
    <source>
        <strain>ATCC 700278 / DSM 12444 / CCUG 56034 / CIP 105152 / NBRC 16084 / F199</strain>
    </source>
</reference>
<proteinExistence type="inferred from homology"/>
<keyword id="KW-0413">Isomerase</keyword>
<keyword id="KW-0460">Magnesium</keyword>
<keyword id="KW-0479">Metal-binding</keyword>
<keyword id="KW-0597">Phosphoprotein</keyword>
<keyword id="KW-1185">Reference proteome</keyword>
<comment type="function">
    <text evidence="1">Catalyzes the conversion of glucosamine-6-phosphate to glucosamine-1-phosphate.</text>
</comment>
<comment type="catalytic activity">
    <reaction evidence="1">
        <text>alpha-D-glucosamine 1-phosphate = D-glucosamine 6-phosphate</text>
        <dbReference type="Rhea" id="RHEA:23424"/>
        <dbReference type="ChEBI" id="CHEBI:58516"/>
        <dbReference type="ChEBI" id="CHEBI:58725"/>
        <dbReference type="EC" id="5.4.2.10"/>
    </reaction>
</comment>
<comment type="cofactor">
    <cofactor evidence="1">
        <name>Mg(2+)</name>
        <dbReference type="ChEBI" id="CHEBI:18420"/>
    </cofactor>
    <text evidence="1">Binds 1 Mg(2+) ion per subunit.</text>
</comment>
<comment type="PTM">
    <text evidence="1">Activated by phosphorylation.</text>
</comment>
<comment type="similarity">
    <text evidence="1">Belongs to the phosphohexose mutase family.</text>
</comment>